<proteinExistence type="inferred from homology"/>
<comment type="function">
    <text evidence="1">Involved in iron-sulfur (Fe-S) cluster assembly. May act as a regulator of Fe-S biogenesis.</text>
</comment>
<comment type="similarity">
    <text evidence="1">Belongs to the frataxin family.</text>
</comment>
<keyword id="KW-0408">Iron</keyword>
<keyword id="KW-0479">Metal-binding</keyword>
<gene>
    <name evidence="1" type="primary">cyaY</name>
    <name type="ordered locus">Bcen_2721</name>
</gene>
<feature type="chain" id="PRO_1000010912" description="Iron-sulfur cluster assembly protein CyaY">
    <location>
        <begin position="1"/>
        <end position="108"/>
    </location>
</feature>
<accession>Q1BRY6</accession>
<name>CYAY_BURO1</name>
<organism>
    <name type="scientific">Burkholderia orbicola (strain AU 1054)</name>
    <dbReference type="NCBI Taxonomy" id="331271"/>
    <lineage>
        <taxon>Bacteria</taxon>
        <taxon>Pseudomonadati</taxon>
        <taxon>Pseudomonadota</taxon>
        <taxon>Betaproteobacteria</taxon>
        <taxon>Burkholderiales</taxon>
        <taxon>Burkholderiaceae</taxon>
        <taxon>Burkholderia</taxon>
        <taxon>Burkholderia cepacia complex</taxon>
        <taxon>Burkholderia orbicola</taxon>
    </lineage>
</organism>
<protein>
    <recommendedName>
        <fullName evidence="1">Iron-sulfur cluster assembly protein CyaY</fullName>
    </recommendedName>
</protein>
<dbReference type="EMBL" id="CP000378">
    <property type="protein sequence ID" value="ABF77619.1"/>
    <property type="molecule type" value="Genomic_DNA"/>
</dbReference>
<dbReference type="SMR" id="Q1BRY6"/>
<dbReference type="HOGENOM" id="CLU_080880_3_0_4"/>
<dbReference type="GO" id="GO:0005829">
    <property type="term" value="C:cytosol"/>
    <property type="evidence" value="ECO:0007669"/>
    <property type="project" value="TreeGrafter"/>
</dbReference>
<dbReference type="GO" id="GO:0008199">
    <property type="term" value="F:ferric iron binding"/>
    <property type="evidence" value="ECO:0007669"/>
    <property type="project" value="InterPro"/>
</dbReference>
<dbReference type="GO" id="GO:0008198">
    <property type="term" value="F:ferrous iron binding"/>
    <property type="evidence" value="ECO:0007669"/>
    <property type="project" value="TreeGrafter"/>
</dbReference>
<dbReference type="GO" id="GO:0016226">
    <property type="term" value="P:iron-sulfur cluster assembly"/>
    <property type="evidence" value="ECO:0007669"/>
    <property type="project" value="UniProtKB-UniRule"/>
</dbReference>
<dbReference type="CDD" id="cd00503">
    <property type="entry name" value="Frataxin"/>
    <property type="match status" value="1"/>
</dbReference>
<dbReference type="Gene3D" id="3.30.920.10">
    <property type="entry name" value="Frataxin/CyaY"/>
    <property type="match status" value="1"/>
</dbReference>
<dbReference type="HAMAP" id="MF_00142">
    <property type="entry name" value="CyaY"/>
    <property type="match status" value="1"/>
</dbReference>
<dbReference type="InterPro" id="IPR047584">
    <property type="entry name" value="CyaY"/>
</dbReference>
<dbReference type="InterPro" id="IPR002908">
    <property type="entry name" value="Frataxin/CyaY"/>
</dbReference>
<dbReference type="InterPro" id="IPR036524">
    <property type="entry name" value="Frataxin/CyaY_sf"/>
</dbReference>
<dbReference type="InterPro" id="IPR020895">
    <property type="entry name" value="Frataxin_CS"/>
</dbReference>
<dbReference type="NCBIfam" id="TIGR03421">
    <property type="entry name" value="FeS_CyaY"/>
    <property type="match status" value="1"/>
</dbReference>
<dbReference type="PANTHER" id="PTHR16821">
    <property type="entry name" value="FRATAXIN"/>
    <property type="match status" value="1"/>
</dbReference>
<dbReference type="PANTHER" id="PTHR16821:SF2">
    <property type="entry name" value="FRATAXIN, MITOCHONDRIAL"/>
    <property type="match status" value="1"/>
</dbReference>
<dbReference type="Pfam" id="PF01491">
    <property type="entry name" value="Frataxin_Cyay"/>
    <property type="match status" value="1"/>
</dbReference>
<dbReference type="SMART" id="SM01219">
    <property type="entry name" value="Frataxin_Cyay"/>
    <property type="match status" value="1"/>
</dbReference>
<dbReference type="SUPFAM" id="SSF55387">
    <property type="entry name" value="Frataxin/Nqo15-like"/>
    <property type="match status" value="1"/>
</dbReference>
<dbReference type="PROSITE" id="PS01344">
    <property type="entry name" value="FRATAXIN_1"/>
    <property type="match status" value="1"/>
</dbReference>
<dbReference type="PROSITE" id="PS50810">
    <property type="entry name" value="FRATAXIN_2"/>
    <property type="match status" value="1"/>
</dbReference>
<reference key="1">
    <citation type="submission" date="2006-05" db="EMBL/GenBank/DDBJ databases">
        <title>Complete sequence of chromosome 1 of Burkholderia cenocepacia AU 1054.</title>
        <authorList>
            <consortium name="US DOE Joint Genome Institute"/>
            <person name="Copeland A."/>
            <person name="Lucas S."/>
            <person name="Lapidus A."/>
            <person name="Barry K."/>
            <person name="Detter J.C."/>
            <person name="Glavina del Rio T."/>
            <person name="Hammon N."/>
            <person name="Israni S."/>
            <person name="Dalin E."/>
            <person name="Tice H."/>
            <person name="Pitluck S."/>
            <person name="Chain P."/>
            <person name="Malfatti S."/>
            <person name="Shin M."/>
            <person name="Vergez L."/>
            <person name="Schmutz J."/>
            <person name="Larimer F."/>
            <person name="Land M."/>
            <person name="Hauser L."/>
            <person name="Kyrpides N."/>
            <person name="Lykidis A."/>
            <person name="LiPuma J.J."/>
            <person name="Konstantinidis K."/>
            <person name="Tiedje J.M."/>
            <person name="Richardson P."/>
        </authorList>
    </citation>
    <scope>NUCLEOTIDE SEQUENCE [LARGE SCALE GENOMIC DNA]</scope>
    <source>
        <strain>AU 1054</strain>
    </source>
</reference>
<evidence type="ECO:0000255" key="1">
    <source>
        <dbReference type="HAMAP-Rule" id="MF_00142"/>
    </source>
</evidence>
<sequence length="108" mass="11941">MSDTEYLARAEAVLAAVERTVDVANDGDHDIDLERNGSVLTLTFENGSKIIVNLQPPMKEVWIAAKAGGFHYRFIDGEWRDTRTGTEFFSALTEYATQQAGLPITFSA</sequence>